<dbReference type="EMBL" id="AB016872">
    <property type="protein sequence ID" value="BAB10345.1"/>
    <property type="molecule type" value="Genomic_DNA"/>
</dbReference>
<dbReference type="EMBL" id="CP002688">
    <property type="protein sequence ID" value="AED95791.1"/>
    <property type="molecule type" value="Genomic_DNA"/>
</dbReference>
<dbReference type="EMBL" id="BT008328">
    <property type="protein sequence ID" value="AAP37687.1"/>
    <property type="molecule type" value="mRNA"/>
</dbReference>
<dbReference type="RefSeq" id="NP_199738.1">
    <property type="nucleotide sequence ID" value="NM_124304.4"/>
</dbReference>
<dbReference type="BioGRID" id="20233">
    <property type="interactions" value="1"/>
</dbReference>
<dbReference type="STRING" id="3702.Q9FJ13"/>
<dbReference type="GlyCosmos" id="Q9FJ13">
    <property type="glycosylation" value="13 sites, No reported glycans"/>
</dbReference>
<dbReference type="GlyGen" id="Q9FJ13">
    <property type="glycosylation" value="14 sites"/>
</dbReference>
<dbReference type="PaxDb" id="3702-AT5G49270.1"/>
<dbReference type="ProteomicsDB" id="241140"/>
<dbReference type="EnsemblPlants" id="AT5G49270.1">
    <property type="protein sequence ID" value="AT5G49270.1"/>
    <property type="gene ID" value="AT5G49270"/>
</dbReference>
<dbReference type="GeneID" id="834987"/>
<dbReference type="Gramene" id="AT5G49270.1">
    <property type="protein sequence ID" value="AT5G49270.1"/>
    <property type="gene ID" value="AT5G49270"/>
</dbReference>
<dbReference type="KEGG" id="ath:AT5G49270"/>
<dbReference type="Araport" id="AT5G49270"/>
<dbReference type="TAIR" id="AT5G49270">
    <property type="gene designation" value="SHV2"/>
</dbReference>
<dbReference type="eggNOG" id="ENOG502QUPM">
    <property type="taxonomic scope" value="Eukaryota"/>
</dbReference>
<dbReference type="HOGENOM" id="CLU_420019_0_0_1"/>
<dbReference type="InParanoid" id="Q9FJ13"/>
<dbReference type="OMA" id="FPPQNWR"/>
<dbReference type="OrthoDB" id="2014623at2759"/>
<dbReference type="PhylomeDB" id="Q9FJ13"/>
<dbReference type="PRO" id="PR:Q9FJ13"/>
<dbReference type="Proteomes" id="UP000006548">
    <property type="component" value="Chromosome 5"/>
</dbReference>
<dbReference type="ExpressionAtlas" id="Q9FJ13">
    <property type="expression patterns" value="baseline and differential"/>
</dbReference>
<dbReference type="GO" id="GO:0005886">
    <property type="term" value="C:plasma membrane"/>
    <property type="evidence" value="ECO:0007669"/>
    <property type="project" value="UniProtKB-SubCell"/>
</dbReference>
<dbReference type="GO" id="GO:0098552">
    <property type="term" value="C:side of membrane"/>
    <property type="evidence" value="ECO:0007669"/>
    <property type="project" value="UniProtKB-KW"/>
</dbReference>
<dbReference type="GO" id="GO:0009932">
    <property type="term" value="P:cell tip growth"/>
    <property type="evidence" value="ECO:0000315"/>
    <property type="project" value="TAIR"/>
</dbReference>
<dbReference type="GO" id="GO:0010215">
    <property type="term" value="P:cellulose microfibril organization"/>
    <property type="evidence" value="ECO:0007669"/>
    <property type="project" value="InterPro"/>
</dbReference>
<dbReference type="GO" id="GO:0010053">
    <property type="term" value="P:root epidermal cell differentiation"/>
    <property type="evidence" value="ECO:0000315"/>
    <property type="project" value="TAIR"/>
</dbReference>
<dbReference type="GO" id="GO:0048765">
    <property type="term" value="P:root hair cell differentiation"/>
    <property type="evidence" value="ECO:0000315"/>
    <property type="project" value="TAIR"/>
</dbReference>
<dbReference type="InterPro" id="IPR056900">
    <property type="entry name" value="COB_C"/>
</dbReference>
<dbReference type="InterPro" id="IPR006918">
    <property type="entry name" value="COBRA_pln"/>
</dbReference>
<dbReference type="PANTHER" id="PTHR31052">
    <property type="entry name" value="COBRA-LIKE PROTEIN 7"/>
    <property type="match status" value="1"/>
</dbReference>
<dbReference type="PANTHER" id="PTHR31052:SF20">
    <property type="entry name" value="COBRA-LIKE PROTEIN 9"/>
    <property type="match status" value="1"/>
</dbReference>
<dbReference type="Pfam" id="PF25079">
    <property type="entry name" value="COB_C"/>
    <property type="match status" value="1"/>
</dbReference>
<dbReference type="Pfam" id="PF04833">
    <property type="entry name" value="COBRA"/>
    <property type="match status" value="1"/>
</dbReference>
<comment type="subcellular location">
    <subcellularLocation>
        <location evidence="3">Cell membrane</location>
        <topology evidence="3">Lipid-anchor</topology>
        <topology evidence="3">GPI-anchor</topology>
    </subcellularLocation>
</comment>
<comment type="tissue specificity">
    <text evidence="2">Expressed only in flowers.</text>
</comment>
<comment type="similarity">
    <text evidence="3">Belongs to the COBRA family.</text>
</comment>
<sequence length="663" mass="73136">MGVLLPIFFGVLLLFTVTPPSMSQLPPTIMVPAPAPAPISPSDLCNGIFLSYDFILGRKIPPNDTADQPYRFESVLTVLNNGREELKEWRVFVGFQHNEILISATDALIVNGTELPALVGNGTIFGGYPVSDLKTAIQTAGDLKQMTAEIELVGTQFMVAPPAVPLPSNISLVNEGWLCPVPTLQSKRELTTCCIRDASIIVNTTITTKFLPRQPGDLTIMYDVIRAYDQNYLTEVTMENHNPLGRLDHWELSFDWMRDEFIQKMQGAYPTVVDATKCIFGPQSLIYTGLDFADVLTCERRPIIIDLPPTKKDDSTLGNIPSCCRNGTILPRIMDPSKSVSVFTMQVAKMPPDFNRSALFPPQNWRIKGTLNPDYSCGPPVRVTPTFYPDPSGMPTNKSSFASWQIVCNITQAKTEIPKCCVSFSAFFNDSIIPCNTCACGCVSETRRTCSAETPSLLIPPDALLLPFENRTALTLAWNALKHKTLPNPMPCGDNCGVSINWHMASDYRGGWTVRITIFNWGEIDFPNWFLAVQMKKPALLGFEKAYSFNASLLSVDGGVNNTIFMEGLPGLDYLVAEADEKDPKKKNIRIPGKQQSVIQFSKKLTPGINVAERDGFPAKVIFNGEECLLPDLLPMASGGRRNGAITVLSFITFYVAAFMVLL</sequence>
<protein>
    <recommendedName>
        <fullName>COBRA-like protein 9</fullName>
    </recommendedName>
</protein>
<proteinExistence type="evidence at transcript level"/>
<feature type="signal peptide" evidence="1">
    <location>
        <begin position="1"/>
        <end position="23"/>
    </location>
</feature>
<feature type="chain" id="PRO_0000005585" description="COBRA-like protein 9">
    <location>
        <begin position="24"/>
        <end position="638"/>
    </location>
</feature>
<feature type="propeptide" id="PRO_0000005586" description="Removed in mature form" evidence="1">
    <location>
        <begin position="639"/>
        <end position="663"/>
    </location>
</feature>
<feature type="lipid moiety-binding region" description="GPI-anchor amidated serine" evidence="1">
    <location>
        <position position="638"/>
    </location>
</feature>
<feature type="glycosylation site" description="N-linked (GlcNAc...) asparagine" evidence="1">
    <location>
        <position position="63"/>
    </location>
</feature>
<feature type="glycosylation site" description="N-linked (GlcNAc...) asparagine" evidence="1">
    <location>
        <position position="111"/>
    </location>
</feature>
<feature type="glycosylation site" description="N-linked (GlcNAc...) asparagine" evidence="1">
    <location>
        <position position="121"/>
    </location>
</feature>
<feature type="glycosylation site" description="N-linked (GlcNAc...) asparagine" evidence="1">
    <location>
        <position position="169"/>
    </location>
</feature>
<feature type="glycosylation site" description="N-linked (GlcNAc...) asparagine" evidence="1">
    <location>
        <position position="203"/>
    </location>
</feature>
<feature type="glycosylation site" description="N-linked (GlcNAc...) asparagine" evidence="1">
    <location>
        <position position="326"/>
    </location>
</feature>
<feature type="glycosylation site" description="N-linked (GlcNAc...) asparagine" evidence="1">
    <location>
        <position position="355"/>
    </location>
</feature>
<feature type="glycosylation site" description="N-linked (GlcNAc...) asparagine" evidence="1">
    <location>
        <position position="397"/>
    </location>
</feature>
<feature type="glycosylation site" description="N-linked (GlcNAc...) asparagine" evidence="1">
    <location>
        <position position="409"/>
    </location>
</feature>
<feature type="glycosylation site" description="N-linked (GlcNAc...) asparagine" evidence="1">
    <location>
        <position position="429"/>
    </location>
</feature>
<feature type="glycosylation site" description="N-linked (GlcNAc...) asparagine" evidence="1">
    <location>
        <position position="470"/>
    </location>
</feature>
<feature type="glycosylation site" description="N-linked (GlcNAc...) asparagine" evidence="1">
    <location>
        <position position="550"/>
    </location>
</feature>
<feature type="glycosylation site" description="N-linked (GlcNAc...) asparagine" evidence="1">
    <location>
        <position position="561"/>
    </location>
</feature>
<name>COBL9_ARATH</name>
<accession>Q9FJ13</accession>
<gene>
    <name type="primary">COBL9</name>
    <name type="ordered locus">At5g49270</name>
    <name type="ORF">K21P3.15</name>
</gene>
<keyword id="KW-1003">Cell membrane</keyword>
<keyword id="KW-0325">Glycoprotein</keyword>
<keyword id="KW-0336">GPI-anchor</keyword>
<keyword id="KW-0449">Lipoprotein</keyword>
<keyword id="KW-0472">Membrane</keyword>
<keyword id="KW-1185">Reference proteome</keyword>
<keyword id="KW-0732">Signal</keyword>
<evidence type="ECO:0000255" key="1"/>
<evidence type="ECO:0000269" key="2">
    <source>
    </source>
</evidence>
<evidence type="ECO:0000305" key="3"/>
<organism>
    <name type="scientific">Arabidopsis thaliana</name>
    <name type="common">Mouse-ear cress</name>
    <dbReference type="NCBI Taxonomy" id="3702"/>
    <lineage>
        <taxon>Eukaryota</taxon>
        <taxon>Viridiplantae</taxon>
        <taxon>Streptophyta</taxon>
        <taxon>Embryophyta</taxon>
        <taxon>Tracheophyta</taxon>
        <taxon>Spermatophyta</taxon>
        <taxon>Magnoliopsida</taxon>
        <taxon>eudicotyledons</taxon>
        <taxon>Gunneridae</taxon>
        <taxon>Pentapetalae</taxon>
        <taxon>rosids</taxon>
        <taxon>malvids</taxon>
        <taxon>Brassicales</taxon>
        <taxon>Brassicaceae</taxon>
        <taxon>Camelineae</taxon>
        <taxon>Arabidopsis</taxon>
    </lineage>
</organism>
<reference key="1">
    <citation type="journal article" date="1998" name="DNA Res.">
        <title>Structural analysis of Arabidopsis thaliana chromosome 5. VIII. Sequence features of the regions of 1,081,958 bp covered by seventeen physically assigned P1 and TAC clones.</title>
        <authorList>
            <person name="Asamizu E."/>
            <person name="Sato S."/>
            <person name="Kaneko T."/>
            <person name="Nakamura Y."/>
            <person name="Kotani H."/>
            <person name="Miyajima N."/>
            <person name="Tabata S."/>
        </authorList>
    </citation>
    <scope>NUCLEOTIDE SEQUENCE [LARGE SCALE GENOMIC DNA]</scope>
    <source>
        <strain>cv. Columbia</strain>
    </source>
</reference>
<reference key="2">
    <citation type="journal article" date="2017" name="Plant J.">
        <title>Araport11: a complete reannotation of the Arabidopsis thaliana reference genome.</title>
        <authorList>
            <person name="Cheng C.Y."/>
            <person name="Krishnakumar V."/>
            <person name="Chan A.P."/>
            <person name="Thibaud-Nissen F."/>
            <person name="Schobel S."/>
            <person name="Town C.D."/>
        </authorList>
    </citation>
    <scope>GENOME REANNOTATION</scope>
    <source>
        <strain>cv. Columbia</strain>
    </source>
</reference>
<reference key="3">
    <citation type="journal article" date="2003" name="Science">
        <title>Empirical analysis of transcriptional activity in the Arabidopsis genome.</title>
        <authorList>
            <person name="Yamada K."/>
            <person name="Lim J."/>
            <person name="Dale J.M."/>
            <person name="Chen H."/>
            <person name="Shinn P."/>
            <person name="Palm C.J."/>
            <person name="Southwick A.M."/>
            <person name="Wu H.C."/>
            <person name="Kim C.J."/>
            <person name="Nguyen M."/>
            <person name="Pham P.K."/>
            <person name="Cheuk R.F."/>
            <person name="Karlin-Newmann G."/>
            <person name="Liu S.X."/>
            <person name="Lam B."/>
            <person name="Sakano H."/>
            <person name="Wu T."/>
            <person name="Yu G."/>
            <person name="Miranda M."/>
            <person name="Quach H.L."/>
            <person name="Tripp M."/>
            <person name="Chang C.H."/>
            <person name="Lee J.M."/>
            <person name="Toriumi M.J."/>
            <person name="Chan M.M."/>
            <person name="Tang C.C."/>
            <person name="Onodera C.S."/>
            <person name="Deng J.M."/>
            <person name="Akiyama K."/>
            <person name="Ansari Y."/>
            <person name="Arakawa T."/>
            <person name="Banh J."/>
            <person name="Banno F."/>
            <person name="Bowser L."/>
            <person name="Brooks S.Y."/>
            <person name="Carninci P."/>
            <person name="Chao Q."/>
            <person name="Choy N."/>
            <person name="Enju A."/>
            <person name="Goldsmith A.D."/>
            <person name="Gurjal M."/>
            <person name="Hansen N.F."/>
            <person name="Hayashizaki Y."/>
            <person name="Johnson-Hopson C."/>
            <person name="Hsuan V.W."/>
            <person name="Iida K."/>
            <person name="Karnes M."/>
            <person name="Khan S."/>
            <person name="Koesema E."/>
            <person name="Ishida J."/>
            <person name="Jiang P.X."/>
            <person name="Jones T."/>
            <person name="Kawai J."/>
            <person name="Kamiya A."/>
            <person name="Meyers C."/>
            <person name="Nakajima M."/>
            <person name="Narusaka M."/>
            <person name="Seki M."/>
            <person name="Sakurai T."/>
            <person name="Satou M."/>
            <person name="Tamse R."/>
            <person name="Vaysberg M."/>
            <person name="Wallender E.K."/>
            <person name="Wong C."/>
            <person name="Yamamura Y."/>
            <person name="Yuan S."/>
            <person name="Shinozaki K."/>
            <person name="Davis R.W."/>
            <person name="Theologis A."/>
            <person name="Ecker J.R."/>
        </authorList>
    </citation>
    <scope>NUCLEOTIDE SEQUENCE [LARGE SCALE MRNA]</scope>
    <source>
        <strain>cv. Columbia</strain>
    </source>
</reference>
<reference key="4">
    <citation type="journal article" date="2002" name="Plant Physiol.">
        <title>The COBRA family of putative GPI-anchored proteins in Arabidopsis. A new fellowship in expansion.</title>
        <authorList>
            <person name="Roudier F."/>
            <person name="Schindelman G."/>
            <person name="DeSalle R."/>
            <person name="Benfey P.N."/>
        </authorList>
    </citation>
    <scope>TISSUE SPECIFICITY</scope>
</reference>